<gene>
    <name type="primary">gtfC</name>
</gene>
<proteinExistence type="evidence at protein level"/>
<organism>
    <name type="scientific">Amycolatopsis orientalis</name>
    <name type="common">Nocardia orientalis</name>
    <dbReference type="NCBI Taxonomy" id="31958"/>
    <lineage>
        <taxon>Bacteria</taxon>
        <taxon>Bacillati</taxon>
        <taxon>Actinomycetota</taxon>
        <taxon>Actinomycetes</taxon>
        <taxon>Pseudonocardiales</taxon>
        <taxon>Pseudonocardiaceae</taxon>
        <taxon>Amycolatopsis</taxon>
    </lineage>
</organism>
<accession>P96560</accession>
<feature type="chain" id="PRO_0000430438" description="Glycosyltransferase GtfC">
    <location>
        <begin position="1"/>
        <end position="409"/>
    </location>
</feature>
<reference key="1">
    <citation type="journal article" date="1997" name="Chem. Biol.">
        <title>Production of hybrid glycopeptide antibiotics in vitro and in Streptomyces toyocaensis.</title>
        <authorList>
            <person name="Solenberg P.J."/>
            <person name="Matsushima P."/>
            <person name="Stack D.R."/>
            <person name="Wilkie S.C."/>
            <person name="Thompson R.C."/>
            <person name="Baltz R.H."/>
        </authorList>
    </citation>
    <scope>NUCLEOTIDE SEQUENCE [GENOMIC DNA]</scope>
</reference>
<reference key="2">
    <citation type="journal article" date="1998" name="Chem. Biol.">
        <title>Sequencing and analysis of genes involved in the biosynthesis of a vancomycin group antibiotic.</title>
        <authorList>
            <person name="van Wageningen A."/>
            <person name="Kirkpatrick P."/>
            <person name="Williams D."/>
            <person name="Harris B."/>
            <person name="Kershaw J."/>
            <person name="Lennard N."/>
            <person name="Jones M."/>
            <person name="Jones S."/>
            <person name="Solenberg P."/>
        </authorList>
    </citation>
    <scope>NUCLEOTIDE SEQUENCE [GENOMIC DNA]</scope>
    <scope>PATHWAY</scope>
</reference>
<reference key="3">
    <citation type="journal article" date="2001" name="Biochemistry">
        <title>Tandem action of glycosyltransferases in the maturation of vancomycin and teicoplanin aglycones: novel glycopeptides.</title>
        <authorList>
            <person name="Losey H.C."/>
            <person name="Peczuh M.W."/>
            <person name="Chen Z."/>
            <person name="Eggert U.S."/>
            <person name="Dong S.D."/>
            <person name="Pelczer I."/>
            <person name="Kahne D."/>
            <person name="Walsh C.T."/>
        </authorList>
    </citation>
    <scope>FUNCTION</scope>
    <scope>CATALYTIC ACTIVITY</scope>
</reference>
<reference key="4">
    <citation type="journal article" date="2004" name="Proc. Natl. Acad. Sci. U.S.A.">
        <title>Characterization of a regiospecific epivancosaminyl transferase GtfA and enzymatic reconstitution of the antibiotic chloroeremomycin.</title>
        <authorList>
            <person name="Lu W."/>
            <person name="Oberthuer M."/>
            <person name="Leimkuhler C."/>
            <person name="Tao J."/>
            <person name="Kahne D."/>
            <person name="Walsh C.T."/>
        </authorList>
    </citation>
    <scope>FUNCTION</scope>
    <scope>CATALYTIC ACTIVITY</scope>
</reference>
<protein>
    <recommendedName>
        <fullName>Glycosyltransferase GtfC</fullName>
        <ecNumber>2.4.1.-</ecNumber>
    </recommendedName>
</protein>
<keyword id="KW-0045">Antibiotic biosynthesis</keyword>
<keyword id="KW-0328">Glycosyltransferase</keyword>
<keyword id="KW-0808">Transferase</keyword>
<comment type="function">
    <text evidence="1 2">Catalyzes the attachment of dTDP-L-4-epi-vancosamine to chloroorienticin B to form chloroeremomycin in the biosynthesis of glycopeptide antibiotic chloroeremomycin, a member of the vancomycin group of antibiotics. Also able to use dTDP-L-4-epi-vancosamine and devancoaminyl-vancomycin (DVV) to create epivancomycin. Acts downstream of GtfA.</text>
</comment>
<comment type="catalytic activity">
    <reaction evidence="1 2">
        <text>dTDP-beta-L-vancosamine + devancoaminyl-vancomycin = epivancomycin + dTDP + H(+)</text>
        <dbReference type="Rhea" id="RHEA:45904"/>
        <dbReference type="ChEBI" id="CHEBI:15378"/>
        <dbReference type="ChEBI" id="CHEBI:58369"/>
        <dbReference type="ChEBI" id="CHEBI:75953"/>
        <dbReference type="ChEBI" id="CHEBI:76839"/>
        <dbReference type="ChEBI" id="CHEBI:85491"/>
    </reaction>
</comment>
<comment type="catalytic activity">
    <reaction evidence="1 2">
        <text>chloroorienticin B + dTDP-beta-L-vancosamine = chloroeremomycin + dTDP + H(+)</text>
        <dbReference type="Rhea" id="RHEA:45908"/>
        <dbReference type="ChEBI" id="CHEBI:15378"/>
        <dbReference type="ChEBI" id="CHEBI:58369"/>
        <dbReference type="ChEBI" id="CHEBI:75963"/>
        <dbReference type="ChEBI" id="CHEBI:76839"/>
        <dbReference type="ChEBI" id="CHEBI:85488"/>
    </reaction>
</comment>
<comment type="pathway">
    <text evidence="3">Antibiotic biosynthesis; vancomycin biosynthesis.</text>
</comment>
<comment type="miscellaneous">
    <text>In A.orientalis different glycosyltransferases are involved in biosynthesis of the vancomycin group of antibiotics. GtfA (AC P96558), GtfB (AC P96559) and GtfC are involved in biosynthesis of antibiotic chloroeremomycin, while GtfD (AC Q9AFC7) and GtfE (AC G4V4R9) are involved in biosynthesis of vancomycin.</text>
</comment>
<comment type="similarity">
    <text evidence="4">Belongs to the glycosyltransferase 28 family.</text>
</comment>
<name>GTFC_AMYOR</name>
<evidence type="ECO:0000269" key="1">
    <source>
    </source>
</evidence>
<evidence type="ECO:0000269" key="2">
    <source>
    </source>
</evidence>
<evidence type="ECO:0000269" key="3">
    <source>
    </source>
</evidence>
<evidence type="ECO:0000305" key="4"/>
<sequence length="409" mass="42920">MRVLLSTAGSRGDVEPLVALAVRLQGLGVEARMCASPASAERLAEVGVPHVPVGLQLEGMLLQEGMPPPSPEEERRLAAKAIDMQFDEVPAAAEGCAAVVAAGELAAAAAVRSVAEMLGIPYFYAAYSPNYLPSPHHAPPEDERTTPGVTDNKVLWDERGQRFAKRYGDTLNSRRASVGLPPVEDVFGYGYSERPWLATDPILAPLPPDFDAVQTGTWILPDERPLSAELEAFLAAGSPPVYLGFGSASGPGIDDAARVAIEAIRAHGRRIVLLSGWADLVRPDDGADCFSVDEVNLQVLFSRAAAAIHHGSAGTEHLATLAGIPQIVIPRHTDQPYYAERVADLGIGVALEGPVPTFDAMSAAVATALAPETRARATAVAGTIRTDGAAVAARLLLDAVSREKSAVLA</sequence>
<dbReference type="EC" id="2.4.1.-"/>
<dbReference type="EMBL" id="U84349">
    <property type="protein sequence ID" value="AAB49294.1"/>
    <property type="molecule type" value="Genomic_DNA"/>
</dbReference>
<dbReference type="EMBL" id="AJ223998">
    <property type="protein sequence ID" value="CAA11776.1"/>
    <property type="molecule type" value="Genomic_DNA"/>
</dbReference>
<dbReference type="PIR" id="T30586">
    <property type="entry name" value="T30586"/>
</dbReference>
<dbReference type="SMR" id="P96560"/>
<dbReference type="CAZy" id="GT1">
    <property type="family name" value="Glycosyltransferase Family 1"/>
</dbReference>
<dbReference type="KEGG" id="ag:CAA11776"/>
<dbReference type="UniPathway" id="UPA00162"/>
<dbReference type="GO" id="GO:0016758">
    <property type="term" value="F:hexosyltransferase activity"/>
    <property type="evidence" value="ECO:0000314"/>
    <property type="project" value="UniProtKB"/>
</dbReference>
<dbReference type="GO" id="GO:0008194">
    <property type="term" value="F:UDP-glycosyltransferase activity"/>
    <property type="evidence" value="ECO:0007669"/>
    <property type="project" value="InterPro"/>
</dbReference>
<dbReference type="GO" id="GO:0005975">
    <property type="term" value="P:carbohydrate metabolic process"/>
    <property type="evidence" value="ECO:0007669"/>
    <property type="project" value="InterPro"/>
</dbReference>
<dbReference type="GO" id="GO:0030259">
    <property type="term" value="P:lipid glycosylation"/>
    <property type="evidence" value="ECO:0007669"/>
    <property type="project" value="InterPro"/>
</dbReference>
<dbReference type="GO" id="GO:0033072">
    <property type="term" value="P:vancomycin biosynthetic process"/>
    <property type="evidence" value="ECO:0000314"/>
    <property type="project" value="UniProtKB"/>
</dbReference>
<dbReference type="CDD" id="cd03784">
    <property type="entry name" value="GT1_Gtf-like"/>
    <property type="match status" value="1"/>
</dbReference>
<dbReference type="FunFam" id="3.40.50.2000:FF:000292">
    <property type="entry name" value="Glycosyltransferase GtfE"/>
    <property type="match status" value="1"/>
</dbReference>
<dbReference type="FunFam" id="3.40.50.2000:FF:000009">
    <property type="entry name" value="Sterol 3-beta-glucosyltransferase UGT80A2"/>
    <property type="match status" value="1"/>
</dbReference>
<dbReference type="Gene3D" id="3.40.50.2000">
    <property type="entry name" value="Glycogen Phosphorylase B"/>
    <property type="match status" value="2"/>
</dbReference>
<dbReference type="InterPro" id="IPR010610">
    <property type="entry name" value="EryCIII-like_C"/>
</dbReference>
<dbReference type="InterPro" id="IPR050426">
    <property type="entry name" value="Glycosyltransferase_28"/>
</dbReference>
<dbReference type="InterPro" id="IPR004276">
    <property type="entry name" value="GlycoTrans_28_N"/>
</dbReference>
<dbReference type="InterPro" id="IPR002213">
    <property type="entry name" value="UDP_glucos_trans"/>
</dbReference>
<dbReference type="PANTHER" id="PTHR48050">
    <property type="entry name" value="STEROL 3-BETA-GLUCOSYLTRANSFERASE"/>
    <property type="match status" value="1"/>
</dbReference>
<dbReference type="PANTHER" id="PTHR48050:SF13">
    <property type="entry name" value="STEROL 3-BETA-GLUCOSYLTRANSFERASE UGT80A2"/>
    <property type="match status" value="1"/>
</dbReference>
<dbReference type="Pfam" id="PF06722">
    <property type="entry name" value="EryCIII-like_C"/>
    <property type="match status" value="1"/>
</dbReference>
<dbReference type="Pfam" id="PF03033">
    <property type="entry name" value="Glyco_transf_28"/>
    <property type="match status" value="1"/>
</dbReference>
<dbReference type="SUPFAM" id="SSF53756">
    <property type="entry name" value="UDP-Glycosyltransferase/glycogen phosphorylase"/>
    <property type="match status" value="1"/>
</dbReference>